<keyword id="KW-0687">Ribonucleoprotein</keyword>
<keyword id="KW-0689">Ribosomal protein</keyword>
<keyword id="KW-0694">RNA-binding</keyword>
<keyword id="KW-0699">rRNA-binding</keyword>
<accession>A8YXL5</accession>
<sequence length="122" mass="13210">MIQNESRLKVADNSGARELLVIRVLGGSKRKTGNIGDIVVCTVKQATPGGVVKKGDVVKAVIVRTKSGARREDGSYIKFDENAGVIINADKSPRGTRIFGPVARELREYDFMKIVSLAPEVL</sequence>
<feature type="chain" id="PRO_1000073423" description="Large ribosomal subunit protein uL14">
    <location>
        <begin position="1"/>
        <end position="122"/>
    </location>
</feature>
<protein>
    <recommendedName>
        <fullName evidence="1">Large ribosomal subunit protein uL14</fullName>
    </recommendedName>
    <alternativeName>
        <fullName evidence="2">50S ribosomal protein L14</fullName>
    </alternativeName>
</protein>
<comment type="function">
    <text evidence="1">Binds to 23S rRNA. Forms part of two intersubunit bridges in the 70S ribosome.</text>
</comment>
<comment type="subunit">
    <text evidence="1">Part of the 50S ribosomal subunit. Forms a cluster with proteins L3 and L19. In the 70S ribosome, L14 and L19 interact and together make contacts with the 16S rRNA in bridges B5 and B8.</text>
</comment>
<comment type="similarity">
    <text evidence="1">Belongs to the universal ribosomal protein uL14 family.</text>
</comment>
<dbReference type="EMBL" id="CP000517">
    <property type="protein sequence ID" value="ABX26546.1"/>
    <property type="molecule type" value="Genomic_DNA"/>
</dbReference>
<dbReference type="RefSeq" id="WP_012211380.1">
    <property type="nucleotide sequence ID" value="NC_010080.1"/>
</dbReference>
<dbReference type="SMR" id="A8YXL5"/>
<dbReference type="GeneID" id="83725537"/>
<dbReference type="KEGG" id="lhe:lhv_0322"/>
<dbReference type="eggNOG" id="COG0093">
    <property type="taxonomic scope" value="Bacteria"/>
</dbReference>
<dbReference type="HOGENOM" id="CLU_095071_2_1_9"/>
<dbReference type="Proteomes" id="UP000000790">
    <property type="component" value="Chromosome"/>
</dbReference>
<dbReference type="GO" id="GO:0022625">
    <property type="term" value="C:cytosolic large ribosomal subunit"/>
    <property type="evidence" value="ECO:0007669"/>
    <property type="project" value="TreeGrafter"/>
</dbReference>
<dbReference type="GO" id="GO:0070180">
    <property type="term" value="F:large ribosomal subunit rRNA binding"/>
    <property type="evidence" value="ECO:0007669"/>
    <property type="project" value="TreeGrafter"/>
</dbReference>
<dbReference type="GO" id="GO:0003735">
    <property type="term" value="F:structural constituent of ribosome"/>
    <property type="evidence" value="ECO:0007669"/>
    <property type="project" value="InterPro"/>
</dbReference>
<dbReference type="GO" id="GO:0006412">
    <property type="term" value="P:translation"/>
    <property type="evidence" value="ECO:0007669"/>
    <property type="project" value="UniProtKB-UniRule"/>
</dbReference>
<dbReference type="CDD" id="cd00337">
    <property type="entry name" value="Ribosomal_uL14"/>
    <property type="match status" value="1"/>
</dbReference>
<dbReference type="FunFam" id="2.40.150.20:FF:000001">
    <property type="entry name" value="50S ribosomal protein L14"/>
    <property type="match status" value="1"/>
</dbReference>
<dbReference type="Gene3D" id="2.40.150.20">
    <property type="entry name" value="Ribosomal protein L14"/>
    <property type="match status" value="1"/>
</dbReference>
<dbReference type="HAMAP" id="MF_01367">
    <property type="entry name" value="Ribosomal_uL14"/>
    <property type="match status" value="1"/>
</dbReference>
<dbReference type="InterPro" id="IPR000218">
    <property type="entry name" value="Ribosomal_uL14"/>
</dbReference>
<dbReference type="InterPro" id="IPR005745">
    <property type="entry name" value="Ribosomal_uL14_bac-type"/>
</dbReference>
<dbReference type="InterPro" id="IPR019972">
    <property type="entry name" value="Ribosomal_uL14_CS"/>
</dbReference>
<dbReference type="InterPro" id="IPR036853">
    <property type="entry name" value="Ribosomal_uL14_sf"/>
</dbReference>
<dbReference type="NCBIfam" id="TIGR01067">
    <property type="entry name" value="rplN_bact"/>
    <property type="match status" value="1"/>
</dbReference>
<dbReference type="PANTHER" id="PTHR11761">
    <property type="entry name" value="50S/60S RIBOSOMAL PROTEIN L14/L23"/>
    <property type="match status" value="1"/>
</dbReference>
<dbReference type="PANTHER" id="PTHR11761:SF3">
    <property type="entry name" value="LARGE RIBOSOMAL SUBUNIT PROTEIN UL14M"/>
    <property type="match status" value="1"/>
</dbReference>
<dbReference type="Pfam" id="PF00238">
    <property type="entry name" value="Ribosomal_L14"/>
    <property type="match status" value="1"/>
</dbReference>
<dbReference type="SMART" id="SM01374">
    <property type="entry name" value="Ribosomal_L14"/>
    <property type="match status" value="1"/>
</dbReference>
<dbReference type="SUPFAM" id="SSF50193">
    <property type="entry name" value="Ribosomal protein L14"/>
    <property type="match status" value="1"/>
</dbReference>
<dbReference type="PROSITE" id="PS00049">
    <property type="entry name" value="RIBOSOMAL_L14"/>
    <property type="match status" value="1"/>
</dbReference>
<evidence type="ECO:0000255" key="1">
    <source>
        <dbReference type="HAMAP-Rule" id="MF_01367"/>
    </source>
</evidence>
<evidence type="ECO:0000305" key="2"/>
<proteinExistence type="inferred from homology"/>
<organism>
    <name type="scientific">Lactobacillus helveticus (strain DPC 4571)</name>
    <dbReference type="NCBI Taxonomy" id="405566"/>
    <lineage>
        <taxon>Bacteria</taxon>
        <taxon>Bacillati</taxon>
        <taxon>Bacillota</taxon>
        <taxon>Bacilli</taxon>
        <taxon>Lactobacillales</taxon>
        <taxon>Lactobacillaceae</taxon>
        <taxon>Lactobacillus</taxon>
    </lineage>
</organism>
<name>RL14_LACH4</name>
<reference key="1">
    <citation type="journal article" date="2008" name="J. Bacteriol.">
        <title>Genome sequence of Lactobacillus helveticus: an organism distinguished by selective gene loss and IS element expansion.</title>
        <authorList>
            <person name="Callanan M."/>
            <person name="Kaleta P."/>
            <person name="O'Callaghan J."/>
            <person name="O'Sullivan O."/>
            <person name="Jordan K."/>
            <person name="McAuliffe O."/>
            <person name="Sangrador-Vegas A."/>
            <person name="Slattery L."/>
            <person name="Fitzgerald G.F."/>
            <person name="Beresford T."/>
            <person name="Ross R.P."/>
        </authorList>
    </citation>
    <scope>NUCLEOTIDE SEQUENCE [LARGE SCALE GENOMIC DNA]</scope>
    <source>
        <strain>DPC 4571</strain>
    </source>
</reference>
<gene>
    <name evidence="1" type="primary">rplN</name>
    <name type="ordered locus">lhv_0322</name>
</gene>